<accession>E9Q7R9</accession>
<protein>
    <recommendedName>
        <fullName evidence="7">Cilia- and flagella-associated protein 43</fullName>
    </recommendedName>
</protein>
<proteinExistence type="evidence at protein level"/>
<reference key="1">
    <citation type="journal article" date="2009" name="PLoS Biol.">
        <title>Lineage-specific biology revealed by a finished genome assembly of the mouse.</title>
        <authorList>
            <person name="Church D.M."/>
            <person name="Goodstadt L."/>
            <person name="Hillier L.W."/>
            <person name="Zody M.C."/>
            <person name="Goldstein S."/>
            <person name="She X."/>
            <person name="Bult C.J."/>
            <person name="Agarwala R."/>
            <person name="Cherry J.L."/>
            <person name="DiCuccio M."/>
            <person name="Hlavina W."/>
            <person name="Kapustin Y."/>
            <person name="Meric P."/>
            <person name="Maglott D."/>
            <person name="Birtle Z."/>
            <person name="Marques A.C."/>
            <person name="Graves T."/>
            <person name="Zhou S."/>
            <person name="Teague B."/>
            <person name="Potamousis K."/>
            <person name="Churas C."/>
            <person name="Place M."/>
            <person name="Herschleb J."/>
            <person name="Runnheim R."/>
            <person name="Forrest D."/>
            <person name="Amos-Landgraf J."/>
            <person name="Schwartz D.C."/>
            <person name="Cheng Z."/>
            <person name="Lindblad-Toh K."/>
            <person name="Eichler E.E."/>
            <person name="Ponting C.P."/>
        </authorList>
    </citation>
    <scope>NUCLEOTIDE SEQUENCE [LARGE SCALE GENOMIC DNA]</scope>
    <source>
        <strain>C57BL/6J</strain>
    </source>
</reference>
<reference key="2">
    <citation type="journal article" date="2010" name="Cell">
        <title>A tissue-specific atlas of mouse protein phosphorylation and expression.</title>
        <authorList>
            <person name="Huttlin E.L."/>
            <person name="Jedrychowski M.P."/>
            <person name="Elias J.E."/>
            <person name="Goswami T."/>
            <person name="Rad R."/>
            <person name="Beausoleil S.A."/>
            <person name="Villen J."/>
            <person name="Haas W."/>
            <person name="Sowa M.E."/>
            <person name="Gygi S.P."/>
        </authorList>
    </citation>
    <scope>IDENTIFICATION BY MASS SPECTROMETRY [LARGE SCALE ANALYSIS]</scope>
</reference>
<reference key="3">
    <citation type="journal article" date="2017" name="Am. J. Hum. Genet.">
        <title>Biallelic mutations in CFAP43 and CFAP44 cause male infertility with multiple morphological abnormalities of the sperm flagella.</title>
        <authorList>
            <person name="Tang S."/>
            <person name="Wang X."/>
            <person name="Li W."/>
            <person name="Yang X."/>
            <person name="Li Z."/>
            <person name="Liu W."/>
            <person name="Li C."/>
            <person name="Zhu Z."/>
            <person name="Wang L."/>
            <person name="Wang J."/>
            <person name="Zhang L."/>
            <person name="Sun X."/>
            <person name="Zhi E."/>
            <person name="Wang H."/>
            <person name="Li H."/>
            <person name="Jin L."/>
            <person name="Luo Y."/>
            <person name="Wang J."/>
            <person name="Yang S."/>
            <person name="Zhang F."/>
        </authorList>
    </citation>
    <scope>DISRUPTION PHENOTYPE</scope>
    <scope>TISSUE SPECIFICITY</scope>
    <scope>FUNCTION</scope>
</reference>
<reference key="4">
    <citation type="journal article" date="2018" name="Nat. Commun.">
        <title>Mutations in CFAP43 and CFAP44 cause male infertility and flagellum defects in Trypanosoma and human.</title>
        <authorList>
            <person name="Coutton C."/>
            <person name="Vargas A.S."/>
            <person name="Amiri-Yekta A."/>
            <person name="Kherraf Z.E."/>
            <person name="Ben Mustapha S.F."/>
            <person name="Le Tanno P."/>
            <person name="Wambergue-Legrand C."/>
            <person name="Karaouzene T."/>
            <person name="Martinez G."/>
            <person name="Crouzy S."/>
            <person name="Daneshipour A."/>
            <person name="Hosseini S.H."/>
            <person name="Mitchell V."/>
            <person name="Halouani L."/>
            <person name="Marrakchi O."/>
            <person name="Makni M."/>
            <person name="Latrous H."/>
            <person name="Kharouf M."/>
            <person name="Deleuze J.F."/>
            <person name="Boland A."/>
            <person name="Hennebicq S."/>
            <person name="Satre V."/>
            <person name="Jouk P.S."/>
            <person name="Thierry-Mieg N."/>
            <person name="Conne B."/>
            <person name="Dacheux D."/>
            <person name="Landrein N."/>
            <person name="Schmitt A."/>
            <person name="Stouvenel L."/>
            <person name="Lores P."/>
            <person name="El Khouri E."/>
            <person name="Bottari S.P."/>
            <person name="Faure J."/>
            <person name="Wolf J.P."/>
            <person name="Pernet-Gallay K."/>
            <person name="Escoffier J."/>
            <person name="Gourabi H."/>
            <person name="Robinson D.R."/>
            <person name="Nef S."/>
            <person name="Dulioust E."/>
            <person name="Zouari R."/>
            <person name="Bonhivers M."/>
            <person name="Toure A."/>
            <person name="Arnoult C."/>
            <person name="Ray P.F."/>
        </authorList>
    </citation>
    <scope>DISRUPTION PHENOTYPE</scope>
    <scope>FUNCTION</scope>
</reference>
<reference key="5">
    <citation type="journal article" date="2020" name="Dev. Biol.">
        <title>CFAP43 modulates ciliary beating in mouse and Xenopus.</title>
        <authorList>
            <person name="Rachev E."/>
            <person name="Schuster-Gossler K."/>
            <person name="Fuhl F."/>
            <person name="Ott T."/>
            <person name="Tveriakhina L."/>
            <person name="Beckers A."/>
            <person name="Hegermann J."/>
            <person name="Boldt K."/>
            <person name="Mai M."/>
            <person name="Kremmer E."/>
            <person name="Ueffing M."/>
            <person name="Blum M."/>
            <person name="Gossler A."/>
        </authorList>
    </citation>
    <scope>FUNCTION</scope>
    <scope>DISRUPTION PHENOTYPE</scope>
    <scope>SUBCELLULAR LOCATION</scope>
    <scope>TISSUE SPECIFICITY</scope>
    <scope>DEVELOPMENTAL STAGE</scope>
</reference>
<keyword id="KW-0966">Cell projection</keyword>
<keyword id="KW-0969">Cilium</keyword>
<keyword id="KW-0175">Coiled coil</keyword>
<keyword id="KW-0963">Cytoplasm</keyword>
<keyword id="KW-0206">Cytoskeleton</keyword>
<keyword id="KW-0221">Differentiation</keyword>
<keyword id="KW-0282">Flagellum</keyword>
<keyword id="KW-1185">Reference proteome</keyword>
<keyword id="KW-0677">Repeat</keyword>
<keyword id="KW-0744">Spermatogenesis</keyword>
<keyword id="KW-0853">WD repeat</keyword>
<dbReference type="EMBL" id="AC126679">
    <property type="status" value="NOT_ANNOTATED_CDS"/>
    <property type="molecule type" value="Genomic_DNA"/>
</dbReference>
<dbReference type="EMBL" id="AC131719">
    <property type="status" value="NOT_ANNOTATED_CDS"/>
    <property type="molecule type" value="Genomic_DNA"/>
</dbReference>
<dbReference type="CCDS" id="CCDS57146.1"/>
<dbReference type="RefSeq" id="NP_081835.2">
    <property type="nucleotide sequence ID" value="NM_027559.2"/>
</dbReference>
<dbReference type="SMR" id="E9Q7R9"/>
<dbReference type="FunCoup" id="E9Q7R9">
    <property type="interactions" value="98"/>
</dbReference>
<dbReference type="STRING" id="10090.ENSMUSP00000125007"/>
<dbReference type="GlyGen" id="E9Q7R9">
    <property type="glycosylation" value="1 site"/>
</dbReference>
<dbReference type="iPTMnet" id="E9Q7R9"/>
<dbReference type="PhosphoSitePlus" id="E9Q7R9"/>
<dbReference type="jPOST" id="E9Q7R9"/>
<dbReference type="PaxDb" id="10090-ENSMUSP00000125007"/>
<dbReference type="ProteomicsDB" id="318422"/>
<dbReference type="Antibodypedia" id="77712">
    <property type="antibodies" value="4 antibodies from 4 providers"/>
</dbReference>
<dbReference type="Ensembl" id="ENSMUST00000160247.3">
    <property type="protein sequence ID" value="ENSMUSP00000125007.2"/>
    <property type="gene ID" value="ENSMUSG00000044948.18"/>
</dbReference>
<dbReference type="GeneID" id="100048534"/>
<dbReference type="KEGG" id="mmu:100048534"/>
<dbReference type="UCSC" id="uc012bnf.1">
    <property type="organism name" value="mouse"/>
</dbReference>
<dbReference type="AGR" id="MGI:1289258"/>
<dbReference type="CTD" id="80217"/>
<dbReference type="MGI" id="MGI:1289258">
    <property type="gene designation" value="Cfap43"/>
</dbReference>
<dbReference type="VEuPathDB" id="HostDB:ENSMUSG00000044948"/>
<dbReference type="eggNOG" id="ENOG502QQ39">
    <property type="taxonomic scope" value="Eukaryota"/>
</dbReference>
<dbReference type="GeneTree" id="ENSGT00530000064714"/>
<dbReference type="HOGENOM" id="CLU_000937_1_0_1"/>
<dbReference type="InParanoid" id="E9Q7R9"/>
<dbReference type="OMA" id="WNWESNV"/>
<dbReference type="OrthoDB" id="535167at2759"/>
<dbReference type="PhylomeDB" id="E9Q7R9"/>
<dbReference type="TreeFam" id="TF326434"/>
<dbReference type="BioGRID-ORCS" id="100048534">
    <property type="hits" value="2 hits in 60 CRISPR screens"/>
</dbReference>
<dbReference type="ChiTaRS" id="Cfap43">
    <property type="organism name" value="mouse"/>
</dbReference>
<dbReference type="PRO" id="PR:E9Q7R9"/>
<dbReference type="Proteomes" id="UP000000589">
    <property type="component" value="Chromosome 19"/>
</dbReference>
<dbReference type="Bgee" id="ENSMUSG00000044948">
    <property type="expression patterns" value="Expressed in spermatid and 70 other cell types or tissues"/>
</dbReference>
<dbReference type="ExpressionAtlas" id="E9Q7R9">
    <property type="expression patterns" value="baseline and differential"/>
</dbReference>
<dbReference type="GO" id="GO:0097729">
    <property type="term" value="C:9+2 motile cilium"/>
    <property type="evidence" value="ECO:0000314"/>
    <property type="project" value="MGI"/>
</dbReference>
<dbReference type="GO" id="GO:0005930">
    <property type="term" value="C:axoneme"/>
    <property type="evidence" value="ECO:0000314"/>
    <property type="project" value="MGI"/>
</dbReference>
<dbReference type="GO" id="GO:0005576">
    <property type="term" value="C:extracellular region"/>
    <property type="evidence" value="ECO:0007669"/>
    <property type="project" value="GOC"/>
</dbReference>
<dbReference type="GO" id="GO:0007420">
    <property type="term" value="P:brain development"/>
    <property type="evidence" value="ECO:0000315"/>
    <property type="project" value="MGI"/>
</dbReference>
<dbReference type="GO" id="GO:0000902">
    <property type="term" value="P:cell morphogenesis"/>
    <property type="evidence" value="ECO:0000315"/>
    <property type="project" value="MGI"/>
</dbReference>
<dbReference type="GO" id="GO:0090660">
    <property type="term" value="P:cerebrospinal fluid circulation"/>
    <property type="evidence" value="ECO:0000315"/>
    <property type="project" value="MGI"/>
</dbReference>
<dbReference type="GO" id="GO:0044782">
    <property type="term" value="P:cilium organization"/>
    <property type="evidence" value="ECO:0000315"/>
    <property type="project" value="MGI"/>
</dbReference>
<dbReference type="GO" id="GO:0003351">
    <property type="term" value="P:epithelial cilium movement involved in extracellular fluid movement"/>
    <property type="evidence" value="ECO:0000266"/>
    <property type="project" value="MGI"/>
</dbReference>
<dbReference type="GO" id="GO:0051649">
    <property type="term" value="P:establishment of localization in cell"/>
    <property type="evidence" value="ECO:0000315"/>
    <property type="project" value="MGI"/>
</dbReference>
<dbReference type="GO" id="GO:0030317">
    <property type="term" value="P:flagellated sperm motility"/>
    <property type="evidence" value="ECO:0000315"/>
    <property type="project" value="UniProtKB"/>
</dbReference>
<dbReference type="GO" id="GO:0044458">
    <property type="term" value="P:motile cilium assembly"/>
    <property type="evidence" value="ECO:0000315"/>
    <property type="project" value="MGI"/>
</dbReference>
<dbReference type="GO" id="GO:0120197">
    <property type="term" value="P:mucociliary clearance"/>
    <property type="evidence" value="ECO:0000315"/>
    <property type="project" value="MGI"/>
</dbReference>
<dbReference type="GO" id="GO:0006997">
    <property type="term" value="P:nucleus organization"/>
    <property type="evidence" value="ECO:0000316"/>
    <property type="project" value="MGI"/>
</dbReference>
<dbReference type="GO" id="GO:0003356">
    <property type="term" value="P:regulation of cilium beat frequency"/>
    <property type="evidence" value="ECO:0000315"/>
    <property type="project" value="UniProtKB"/>
</dbReference>
<dbReference type="GO" id="GO:0007288">
    <property type="term" value="P:sperm axoneme assembly"/>
    <property type="evidence" value="ECO:0000315"/>
    <property type="project" value="UniProtKB"/>
</dbReference>
<dbReference type="GO" id="GO:0007283">
    <property type="term" value="P:spermatogenesis"/>
    <property type="evidence" value="ECO:0000315"/>
    <property type="project" value="MGI"/>
</dbReference>
<dbReference type="Gene3D" id="2.130.10.10">
    <property type="entry name" value="YVTN repeat-like/Quinoprotein amine dehydrogenase"/>
    <property type="match status" value="2"/>
</dbReference>
<dbReference type="InterPro" id="IPR011044">
    <property type="entry name" value="Quino_amine_DH_bsu"/>
</dbReference>
<dbReference type="InterPro" id="IPR015943">
    <property type="entry name" value="WD40/YVTN_repeat-like_dom_sf"/>
</dbReference>
<dbReference type="InterPro" id="IPR036322">
    <property type="entry name" value="WD40_repeat_dom_sf"/>
</dbReference>
<dbReference type="InterPro" id="IPR001680">
    <property type="entry name" value="WD40_rpt"/>
</dbReference>
<dbReference type="PANTHER" id="PTHR14885:SF1">
    <property type="entry name" value="CILIA- AND FLAGELLA-ASSOCIATED PROTEIN 43"/>
    <property type="match status" value="1"/>
</dbReference>
<dbReference type="PANTHER" id="PTHR14885">
    <property type="entry name" value="CILIA- AND FLAGELLA-ASSOCIATED PROTEIN 43-RELATED"/>
    <property type="match status" value="1"/>
</dbReference>
<dbReference type="SMART" id="SM00320">
    <property type="entry name" value="WD40"/>
    <property type="match status" value="3"/>
</dbReference>
<dbReference type="SUPFAM" id="SSF50978">
    <property type="entry name" value="WD40 repeat-like"/>
    <property type="match status" value="1"/>
</dbReference>
<dbReference type="SUPFAM" id="SSF50969">
    <property type="entry name" value="YVTN repeat-like/Quinoprotein amine dehydrogenase"/>
    <property type="match status" value="1"/>
</dbReference>
<sequence length="1682" mass="193426">MSQDPERDDVTASATASASASAPASASAHYSGSSLSVRWVQGFPSQNVHFVNDQTICYPSGNFVIFINLETKKKTVLQCINGIVGVMATNVPSEVVAFSDRRFKPVIYIYSFPSLTRKNKLKGDILLDYTLLCFSYCGTYLASYSSLPEFELALWNWEASAILCKKSNPGMDVSQMSFNPMNWHQMCLSSSSAMSVWTIERSNQEHHFRIRSVKLPLEDATFLNEPDMLFPTTLPKDLIYGPVLPLSAIAGLVGEEAETFRPKDDIYPLLHPTMHCWTPSSDLYVGCEEGHLLMINTETLKVTVLQKAEEFPLPDGAPLINPLTLVYQKDGILASGIDGVIYSFIIKDSKYQVKTFLEFDGPVTHLVFSPSYKMLLIQTDKGSVYIYTFGAEMPLDKLLDACDGKVQAVSFITPGTKYFLTLTSSGEVSTVSLEDCNCTSRIFLKTQATALACSPSSPTAAVGTVDGYVYFLNILDVESPQMIHQAFLSQSPVKIVTYDQRGIFLLVGTEEGNIFVIDARPSKSFQIFGFTETGKDILQISTVSVMESDVVEVLVLYPLPDMGRSRLEYFTLPVMLPEVVPENFSDERGRLKDDLTHKYLYEVEHTLSSAVLGFTGSKIFGFCSQVPYICSYVMPVKEHTGVLVLKPHQKVQSKQYGSGTIYLSSHGLWLMTIAKCGILCIRDMFSMETFVRCRSHSHQGRGIQNMKMSLDGQHILVNGKDDNTLVCLKWKRLGANIASEIFEHSRPLVLHLSQTVESESVYLALSRESTNEQQEETTESQKHLNSDSSEEEAVIDHKMIPWIQQKMEEAIKKEVRIFSPRRKEIKRGIKELAQVIAMMMEENEKVDIIAKLDEQEFCLDADELERLHDECEEEVAKIRKDVEMHNLAQSYLTELIKEECWNSMAVKGRALKCFHIPYVVDNFPMKERTEEELQELSKVMQQKKTEIECLKLRKEIVEVQATTTIAKKHHEEEEEEEEDEERTIKTTSLPNYLLGSLSTDFGADTSLLTSQLDLHSREEKINQIILLKDIIYNIKRNFNSEFDAAYKQKEIEIARVKEKNVRIAEIISDLELEETVWQPVFEDSEKPERALVVEDDEISFKKYIAPWQRAKIKEVVSTYEMERLQQARISDERQRGLMDMMGGVLEVKKEDILRMVIPQPPFMAKADALWSEDERKQFKEYEKKVKELNEERDKYRKSLEAELKKLQNSIQESTQNFDDHLKRLFERRVKAEMVINQEELKINNIIFSLLLDEELSSREQFLNNYLLKKQEEKTKTAEAIQKAREDLDVFKEHHDMLVAEDKILDRSFKKEFSDILGHQVDVLYKLFKRRPRVHKQKTQADVTSLVPYGERPGSAKLNKENLAQLMKSMDELDNINNMPEGLDPSVWEHFCSTRRAKVENEYKVKQKAACLLEMTTFLRKRMEEDDVVHHEIEKVFHELIRLQDEKVRFQVNLTVQILLKQGQVELENFQLMLEYSDAILINKNIIEDLNSVIRTQGQKKVASMMESKEVHKGIYQIEWEHKKMEMEMEDLNQRAWDIEMLFFSRDRQKYLNEPNYENVIAIQIGIMEQTISVIDKTHKKNVENCKKLLKKLGKYSNQKDVANYTLSCNLREELVAVSERQDICNEIGSKLTCEKIARERYDNQLKQQKLLNISKQQAEQISILQAEVERLRMKTFPALIPM</sequence>
<feature type="chain" id="PRO_0000445512" description="Cilia- and flagella-associated protein 43">
    <location>
        <begin position="1"/>
        <end position="1682"/>
    </location>
</feature>
<feature type="repeat" description="WD 1" evidence="2">
    <location>
        <begin position="168"/>
        <end position="207"/>
    </location>
</feature>
<feature type="repeat" description="WD 2" evidence="2">
    <location>
        <begin position="262"/>
        <end position="305"/>
    </location>
</feature>
<feature type="repeat" description="WD 3" evidence="2">
    <location>
        <begin position="315"/>
        <end position="354"/>
    </location>
</feature>
<feature type="repeat" description="WD 4" evidence="2">
    <location>
        <begin position="358"/>
        <end position="397"/>
    </location>
</feature>
<feature type="repeat" description="WD 5" evidence="2">
    <location>
        <begin position="488"/>
        <end position="527"/>
    </location>
</feature>
<feature type="repeat" description="WD 6" evidence="2">
    <location>
        <begin position="697"/>
        <end position="738"/>
    </location>
</feature>
<feature type="region of interest" description="Disordered" evidence="3">
    <location>
        <begin position="767"/>
        <end position="790"/>
    </location>
</feature>
<feature type="coiled-coil region" evidence="2">
    <location>
        <begin position="926"/>
        <end position="960"/>
    </location>
</feature>
<feature type="coiled-coil region" evidence="2">
    <location>
        <begin position="1171"/>
        <end position="1223"/>
    </location>
</feature>
<organism>
    <name type="scientific">Mus musculus</name>
    <name type="common">Mouse</name>
    <dbReference type="NCBI Taxonomy" id="10090"/>
    <lineage>
        <taxon>Eukaryota</taxon>
        <taxon>Metazoa</taxon>
        <taxon>Chordata</taxon>
        <taxon>Craniata</taxon>
        <taxon>Vertebrata</taxon>
        <taxon>Euteleostomi</taxon>
        <taxon>Mammalia</taxon>
        <taxon>Eutheria</taxon>
        <taxon>Euarchontoglires</taxon>
        <taxon>Glires</taxon>
        <taxon>Rodentia</taxon>
        <taxon>Myomorpha</taxon>
        <taxon>Muroidea</taxon>
        <taxon>Muridae</taxon>
        <taxon>Murinae</taxon>
        <taxon>Mus</taxon>
        <taxon>Mus</taxon>
    </lineage>
</organism>
<evidence type="ECO:0000250" key="1">
    <source>
        <dbReference type="UniProtKB" id="Q57WH1"/>
    </source>
</evidence>
<evidence type="ECO:0000255" key="2"/>
<evidence type="ECO:0000256" key="3">
    <source>
        <dbReference type="SAM" id="MobiDB-lite"/>
    </source>
</evidence>
<evidence type="ECO:0000269" key="4">
    <source>
    </source>
</evidence>
<evidence type="ECO:0000269" key="5">
    <source>
    </source>
</evidence>
<evidence type="ECO:0000269" key="6">
    <source>
    </source>
</evidence>
<evidence type="ECO:0000303" key="7">
    <source>
    </source>
</evidence>
<evidence type="ECO:0000305" key="8"/>
<evidence type="ECO:0000312" key="9">
    <source>
        <dbReference type="MGI" id="MGI:1289258"/>
    </source>
</evidence>
<comment type="function">
    <text evidence="4 5">Flagellar protein involved in sperm flagellum axoneme organization and function (PubMed:28552195, PubMed:29449551, PubMed:31884020). Involved in the regulation of the beating frequency of motile cilia on the epithelial cells of the respiratory tract (PubMed:31884020).</text>
</comment>
<comment type="subcellular location">
    <subcellularLocation>
        <location evidence="1">Cell projection</location>
        <location evidence="1">Cilium</location>
        <location evidence="1">Flagellum</location>
    </subcellularLocation>
    <subcellularLocation>
        <location evidence="1">Cytoplasm</location>
        <location evidence="1">Cytoskeleton</location>
        <location evidence="1">Flagellum axoneme</location>
    </subcellularLocation>
    <subcellularLocation>
        <location evidence="6">Cytoplasm</location>
        <location evidence="6">Cytoskeleton</location>
        <location evidence="6">Cilium axoneme</location>
    </subcellularLocation>
</comment>
<comment type="tissue specificity">
    <text evidence="4 6">Expressed in testis (PubMed:28552195). Expressed in the lung, brain, oviduct and nasal cavity (PubMed:31884020).</text>
</comment>
<comment type="developmental stage">
    <text evidence="6">During embryonic development, detected in the left-right organizer at 8.25 dpc and in 17.5 dpc embryos, detected in epithelial cells lining the respiratory tract, brain ependymal cells and the choroid plexus.</text>
</comment>
<comment type="disruption phenotype">
    <text evidence="4 5 6">Mice are viable and show no malformations. However, homozygous males exhibit complete male sterility due to severe defects in sperm mobility. Sperm from mutant mice exhibits teratozoospermia characterized by short, thick, and coiled flagella and sperm axonemal defects. Females are fertile and give litters of normal size (PubMed:28552195, PubMed:29449551, PubMed:31884020). Mice display early onset hydrocephalus and severe mucus accumulation in the nasal cavity (PubMed:31884020).</text>
</comment>
<comment type="similarity">
    <text evidence="8">Belongs to the CFAP43 family.</text>
</comment>
<gene>
    <name evidence="7 9" type="primary">Cfap43</name>
</gene>
<name>CFA43_MOUSE</name>